<keyword id="KW-0143">Chaperone</keyword>
<keyword id="KW-0413">Isomerase</keyword>
<keyword id="KW-0574">Periplasm</keyword>
<keyword id="KW-0677">Repeat</keyword>
<keyword id="KW-0697">Rotamase</keyword>
<keyword id="KW-0732">Signal</keyword>
<dbReference type="EC" id="5.2.1.8" evidence="1"/>
<dbReference type="EMBL" id="AE016795">
    <property type="protein sequence ID" value="AAO09173.2"/>
    <property type="molecule type" value="Genomic_DNA"/>
</dbReference>
<dbReference type="RefSeq" id="WP_011078740.1">
    <property type="nucleotide sequence ID" value="NC_004459.3"/>
</dbReference>
<dbReference type="SMR" id="Q8DED4"/>
<dbReference type="KEGG" id="vvu:VV1_0661"/>
<dbReference type="HOGENOM" id="CLU_034646_11_0_6"/>
<dbReference type="Proteomes" id="UP000002275">
    <property type="component" value="Chromosome 1"/>
</dbReference>
<dbReference type="GO" id="GO:0030288">
    <property type="term" value="C:outer membrane-bounded periplasmic space"/>
    <property type="evidence" value="ECO:0007669"/>
    <property type="project" value="InterPro"/>
</dbReference>
<dbReference type="GO" id="GO:0042277">
    <property type="term" value="F:peptide binding"/>
    <property type="evidence" value="ECO:0007669"/>
    <property type="project" value="InterPro"/>
</dbReference>
<dbReference type="GO" id="GO:0003755">
    <property type="term" value="F:peptidyl-prolyl cis-trans isomerase activity"/>
    <property type="evidence" value="ECO:0007669"/>
    <property type="project" value="UniProtKB-UniRule"/>
</dbReference>
<dbReference type="GO" id="GO:0051082">
    <property type="term" value="F:unfolded protein binding"/>
    <property type="evidence" value="ECO:0007669"/>
    <property type="project" value="UniProtKB-UniRule"/>
</dbReference>
<dbReference type="GO" id="GO:0043165">
    <property type="term" value="P:Gram-negative-bacterium-type cell outer membrane assembly"/>
    <property type="evidence" value="ECO:0007669"/>
    <property type="project" value="InterPro"/>
</dbReference>
<dbReference type="GO" id="GO:0006457">
    <property type="term" value="P:protein folding"/>
    <property type="evidence" value="ECO:0007669"/>
    <property type="project" value="UniProtKB-UniRule"/>
</dbReference>
<dbReference type="GO" id="GO:0050821">
    <property type="term" value="P:protein stabilization"/>
    <property type="evidence" value="ECO:0007669"/>
    <property type="project" value="InterPro"/>
</dbReference>
<dbReference type="Gene3D" id="3.10.50.40">
    <property type="match status" value="2"/>
</dbReference>
<dbReference type="Gene3D" id="1.10.4030.10">
    <property type="entry name" value="Porin chaperone SurA, peptide-binding domain"/>
    <property type="match status" value="2"/>
</dbReference>
<dbReference type="HAMAP" id="MF_01183">
    <property type="entry name" value="Chaperone_SurA"/>
    <property type="match status" value="1"/>
</dbReference>
<dbReference type="InterPro" id="IPR050280">
    <property type="entry name" value="OMP_Chaperone_SurA"/>
</dbReference>
<dbReference type="InterPro" id="IPR046357">
    <property type="entry name" value="PPIase_dom_sf"/>
</dbReference>
<dbReference type="InterPro" id="IPR000297">
    <property type="entry name" value="PPIase_PpiC"/>
</dbReference>
<dbReference type="InterPro" id="IPR023034">
    <property type="entry name" value="PPIase_SurA"/>
</dbReference>
<dbReference type="InterPro" id="IPR015391">
    <property type="entry name" value="SurA_N"/>
</dbReference>
<dbReference type="InterPro" id="IPR027304">
    <property type="entry name" value="Trigger_fact/SurA_dom_sf"/>
</dbReference>
<dbReference type="NCBIfam" id="NF008038">
    <property type="entry name" value="PRK10770.1"/>
    <property type="match status" value="1"/>
</dbReference>
<dbReference type="PANTHER" id="PTHR47637">
    <property type="entry name" value="CHAPERONE SURA"/>
    <property type="match status" value="1"/>
</dbReference>
<dbReference type="PANTHER" id="PTHR47637:SF1">
    <property type="entry name" value="CHAPERONE SURA"/>
    <property type="match status" value="1"/>
</dbReference>
<dbReference type="Pfam" id="PF13616">
    <property type="entry name" value="Rotamase_3"/>
    <property type="match status" value="2"/>
</dbReference>
<dbReference type="Pfam" id="PF09312">
    <property type="entry name" value="SurA_N"/>
    <property type="match status" value="1"/>
</dbReference>
<dbReference type="SUPFAM" id="SSF54534">
    <property type="entry name" value="FKBP-like"/>
    <property type="match status" value="2"/>
</dbReference>
<dbReference type="SUPFAM" id="SSF109998">
    <property type="entry name" value="Triger factor/SurA peptide-binding domain-like"/>
    <property type="match status" value="1"/>
</dbReference>
<dbReference type="PROSITE" id="PS50198">
    <property type="entry name" value="PPIC_PPIASE_2"/>
    <property type="match status" value="2"/>
</dbReference>
<sequence length="428" mass="47721">MNIWKTLLLGMLVTGSAVSAPVELDKVAVIVNDGVILQSDIDTATKTLRANAKKSGQALPDADVLNEQIVDKLIIDTLQTQEADRIGVRIDDTRLNQAIEEIARNNNQTIDELSAAIASEGVSYAEFREQIRKEMAASEARNALVRRRINILPAEVDNLAELLSKETNASVEYRIGHIQLRFTDGQDKSALEAQAKELVEKLKQGADFSTMAYTYSKGPKALQGGDWGWMRKEEMPTIFADQIKMQNKGSIIGPFRSGVGFHILKIEDVKGLETVAVTEVNARHILLKPTVILSDEGAQRELNEFIRRIRAGEATFGELAQQYSQDPGSAAQDGELGYQTPDLYVPEFKHQVETLPVGTISEPFKTVHGWHIVEVLDRREVDRTDSAMKNKAYRILFNRKFNEEVGAWMQELRAGAFVEIINEEENDG</sequence>
<gene>
    <name evidence="1" type="primary">surA</name>
    <name type="ordered locus">VV1_0661</name>
</gene>
<evidence type="ECO:0000255" key="1">
    <source>
        <dbReference type="HAMAP-Rule" id="MF_01183"/>
    </source>
</evidence>
<proteinExistence type="inferred from homology"/>
<name>SURA_VIBVU</name>
<reference key="1">
    <citation type="submission" date="2002-12" db="EMBL/GenBank/DDBJ databases">
        <title>Complete genome sequence of Vibrio vulnificus CMCP6.</title>
        <authorList>
            <person name="Rhee J.H."/>
            <person name="Kim S.Y."/>
            <person name="Chung S.S."/>
            <person name="Kim J.J."/>
            <person name="Moon Y.H."/>
            <person name="Jeong H."/>
            <person name="Choy H.E."/>
        </authorList>
    </citation>
    <scope>NUCLEOTIDE SEQUENCE [LARGE SCALE GENOMIC DNA]</scope>
    <source>
        <strain>CMCP6</strain>
    </source>
</reference>
<organism>
    <name type="scientific">Vibrio vulnificus (strain CMCP6)</name>
    <dbReference type="NCBI Taxonomy" id="216895"/>
    <lineage>
        <taxon>Bacteria</taxon>
        <taxon>Pseudomonadati</taxon>
        <taxon>Pseudomonadota</taxon>
        <taxon>Gammaproteobacteria</taxon>
        <taxon>Vibrionales</taxon>
        <taxon>Vibrionaceae</taxon>
        <taxon>Vibrio</taxon>
    </lineage>
</organism>
<comment type="function">
    <text evidence="1">Chaperone involved in the correct folding and assembly of outer membrane proteins. Recognizes specific patterns of aromatic residues and the orientation of their side chains, which are found more frequently in integral outer membrane proteins. May act in both early periplasmic and late outer membrane-associated steps of protein maturation.</text>
</comment>
<comment type="catalytic activity">
    <reaction evidence="1">
        <text>[protein]-peptidylproline (omega=180) = [protein]-peptidylproline (omega=0)</text>
        <dbReference type="Rhea" id="RHEA:16237"/>
        <dbReference type="Rhea" id="RHEA-COMP:10747"/>
        <dbReference type="Rhea" id="RHEA-COMP:10748"/>
        <dbReference type="ChEBI" id="CHEBI:83833"/>
        <dbReference type="ChEBI" id="CHEBI:83834"/>
        <dbReference type="EC" id="5.2.1.8"/>
    </reaction>
</comment>
<comment type="subcellular location">
    <subcellularLocation>
        <location evidence="1">Periplasm</location>
    </subcellularLocation>
    <text evidence="1">Is capable of associating with the outer membrane.</text>
</comment>
<comment type="domain">
    <text evidence="1">The PPIase activity resides only in the second parvulin domain. The N-terminal region and the C-terminal tail are necessary and sufficient for the chaperone activity of SurA. The PPIase activity is dispensable for SurA to function as a chaperone. The N-terminal region and the C-terminal tail are also required for porin recognition.</text>
</comment>
<feature type="signal peptide" evidence="1">
    <location>
        <begin position="1"/>
        <end position="19"/>
    </location>
</feature>
<feature type="chain" id="PRO_0000270046" description="Chaperone SurA">
    <location>
        <begin position="20"/>
        <end position="428"/>
    </location>
</feature>
<feature type="domain" description="PpiC 1" evidence="1">
    <location>
        <begin position="170"/>
        <end position="268"/>
    </location>
</feature>
<feature type="domain" description="PpiC 2" evidence="1">
    <location>
        <begin position="277"/>
        <end position="377"/>
    </location>
</feature>
<accession>Q8DED4</accession>
<protein>
    <recommendedName>
        <fullName evidence="1">Chaperone SurA</fullName>
    </recommendedName>
    <alternativeName>
        <fullName evidence="1">Peptidyl-prolyl cis-trans isomerase SurA</fullName>
        <shortName evidence="1">PPIase SurA</shortName>
        <ecNumber evidence="1">5.2.1.8</ecNumber>
    </alternativeName>
    <alternativeName>
        <fullName evidence="1">Rotamase SurA</fullName>
    </alternativeName>
</protein>